<name>QUEF_RUEPO</name>
<sequence length="155" mass="17177">MANQDIYANLTQLGGKTELPNSPEEAVLEKVPNPQAGTDYAVRFTAPEFTSLCPLTAQPDFAHIVIDYVPGDWLVESKSLKLYLGSFRNHGAFHEDCSVSIGKRLVELLAPKWLRVGAYWYPRGGIPIDVFYQTGPELPGVWIPDQGVPTYRGRG</sequence>
<accession>Q5LM10</accession>
<comment type="function">
    <text evidence="1">Catalyzes the NADPH-dependent reduction of 7-cyano-7-deazaguanine (preQ0) to 7-aminomethyl-7-deazaguanine (preQ1).</text>
</comment>
<comment type="catalytic activity">
    <reaction evidence="1">
        <text>7-aminomethyl-7-carbaguanine + 2 NADP(+) = 7-cyano-7-deazaguanine + 2 NADPH + 3 H(+)</text>
        <dbReference type="Rhea" id="RHEA:13409"/>
        <dbReference type="ChEBI" id="CHEBI:15378"/>
        <dbReference type="ChEBI" id="CHEBI:45075"/>
        <dbReference type="ChEBI" id="CHEBI:57783"/>
        <dbReference type="ChEBI" id="CHEBI:58349"/>
        <dbReference type="ChEBI" id="CHEBI:58703"/>
        <dbReference type="EC" id="1.7.1.13"/>
    </reaction>
</comment>
<comment type="pathway">
    <text evidence="1">tRNA modification; tRNA-queuosine biosynthesis.</text>
</comment>
<comment type="subcellular location">
    <subcellularLocation>
        <location evidence="1">Cytoplasm</location>
    </subcellularLocation>
</comment>
<comment type="similarity">
    <text evidence="1">Belongs to the GTP cyclohydrolase I family. QueF type 1 subfamily.</text>
</comment>
<organism>
    <name type="scientific">Ruegeria pomeroyi (strain ATCC 700808 / DSM 15171 / DSS-3)</name>
    <name type="common">Silicibacter pomeroyi</name>
    <dbReference type="NCBI Taxonomy" id="246200"/>
    <lineage>
        <taxon>Bacteria</taxon>
        <taxon>Pseudomonadati</taxon>
        <taxon>Pseudomonadota</taxon>
        <taxon>Alphaproteobacteria</taxon>
        <taxon>Rhodobacterales</taxon>
        <taxon>Roseobacteraceae</taxon>
        <taxon>Ruegeria</taxon>
    </lineage>
</organism>
<gene>
    <name evidence="1" type="primary">queF</name>
    <name type="ordered locus">SPO3753</name>
</gene>
<proteinExistence type="inferred from homology"/>
<protein>
    <recommendedName>
        <fullName evidence="1">NADPH-dependent 7-cyano-7-deazaguanine reductase</fullName>
        <ecNumber evidence="1">1.7.1.13</ecNumber>
    </recommendedName>
    <alternativeName>
        <fullName evidence="1">7-cyano-7-carbaguanine reductase</fullName>
    </alternativeName>
    <alternativeName>
        <fullName evidence="1">NADPH-dependent nitrile oxidoreductase</fullName>
    </alternativeName>
    <alternativeName>
        <fullName evidence="1">PreQ(0) reductase</fullName>
    </alternativeName>
</protein>
<reference key="1">
    <citation type="journal article" date="2004" name="Nature">
        <title>Genome sequence of Silicibacter pomeroyi reveals adaptations to the marine environment.</title>
        <authorList>
            <person name="Moran M.A."/>
            <person name="Buchan A."/>
            <person name="Gonzalez J.M."/>
            <person name="Heidelberg J.F."/>
            <person name="Whitman W.B."/>
            <person name="Kiene R.P."/>
            <person name="Henriksen J.R."/>
            <person name="King G.M."/>
            <person name="Belas R."/>
            <person name="Fuqua C."/>
            <person name="Brinkac L.M."/>
            <person name="Lewis M."/>
            <person name="Johri S."/>
            <person name="Weaver B."/>
            <person name="Pai G."/>
            <person name="Eisen J.A."/>
            <person name="Rahe E."/>
            <person name="Sheldon W.M."/>
            <person name="Ye W."/>
            <person name="Miller T.R."/>
            <person name="Carlton J."/>
            <person name="Rasko D.A."/>
            <person name="Paulsen I.T."/>
            <person name="Ren Q."/>
            <person name="Daugherty S.C."/>
            <person name="DeBoy R.T."/>
            <person name="Dodson R.J."/>
            <person name="Durkin A.S."/>
            <person name="Madupu R."/>
            <person name="Nelson W.C."/>
            <person name="Sullivan S.A."/>
            <person name="Rosovitz M.J."/>
            <person name="Haft D.H."/>
            <person name="Selengut J."/>
            <person name="Ward N."/>
        </authorList>
    </citation>
    <scope>NUCLEOTIDE SEQUENCE [LARGE SCALE GENOMIC DNA]</scope>
    <source>
        <strain>ATCC 700808 / DSM 15171 / DSS-3</strain>
    </source>
</reference>
<reference key="2">
    <citation type="journal article" date="2014" name="Stand. Genomic Sci.">
        <title>An updated genome annotation for the model marine bacterium Ruegeria pomeroyi DSS-3.</title>
        <authorList>
            <person name="Rivers A.R."/>
            <person name="Smith C.B."/>
            <person name="Moran M.A."/>
        </authorList>
    </citation>
    <scope>GENOME REANNOTATION</scope>
    <source>
        <strain>ATCC 700808 / DSM 15171 / DSS-3</strain>
    </source>
</reference>
<keyword id="KW-0963">Cytoplasm</keyword>
<keyword id="KW-0521">NADP</keyword>
<keyword id="KW-0560">Oxidoreductase</keyword>
<keyword id="KW-0671">Queuosine biosynthesis</keyword>
<keyword id="KW-1185">Reference proteome</keyword>
<evidence type="ECO:0000255" key="1">
    <source>
        <dbReference type="HAMAP-Rule" id="MF_00818"/>
    </source>
</evidence>
<dbReference type="EC" id="1.7.1.13" evidence="1"/>
<dbReference type="EMBL" id="CP000031">
    <property type="protein sequence ID" value="AAV96974.1"/>
    <property type="molecule type" value="Genomic_DNA"/>
</dbReference>
<dbReference type="RefSeq" id="WP_011049432.1">
    <property type="nucleotide sequence ID" value="NC_003911.12"/>
</dbReference>
<dbReference type="SMR" id="Q5LM10"/>
<dbReference type="STRING" id="246200.SPO3753"/>
<dbReference type="PaxDb" id="246200-SPO3753"/>
<dbReference type="KEGG" id="sil:SPO3753"/>
<dbReference type="eggNOG" id="COG0780">
    <property type="taxonomic scope" value="Bacteria"/>
</dbReference>
<dbReference type="HOGENOM" id="CLU_102489_0_1_5"/>
<dbReference type="OrthoDB" id="9789995at2"/>
<dbReference type="UniPathway" id="UPA00392"/>
<dbReference type="Proteomes" id="UP000001023">
    <property type="component" value="Chromosome"/>
</dbReference>
<dbReference type="GO" id="GO:0005737">
    <property type="term" value="C:cytoplasm"/>
    <property type="evidence" value="ECO:0007669"/>
    <property type="project" value="UniProtKB-SubCell"/>
</dbReference>
<dbReference type="GO" id="GO:0033739">
    <property type="term" value="F:preQ1 synthase activity"/>
    <property type="evidence" value="ECO:0007669"/>
    <property type="project" value="UniProtKB-UniRule"/>
</dbReference>
<dbReference type="GO" id="GO:0008616">
    <property type="term" value="P:queuosine biosynthetic process"/>
    <property type="evidence" value="ECO:0007669"/>
    <property type="project" value="UniProtKB-UniRule"/>
</dbReference>
<dbReference type="GO" id="GO:0006400">
    <property type="term" value="P:tRNA modification"/>
    <property type="evidence" value="ECO:0007669"/>
    <property type="project" value="UniProtKB-UniRule"/>
</dbReference>
<dbReference type="Gene3D" id="3.30.1130.10">
    <property type="match status" value="1"/>
</dbReference>
<dbReference type="HAMAP" id="MF_00818">
    <property type="entry name" value="QueF_type1"/>
    <property type="match status" value="1"/>
</dbReference>
<dbReference type="InterPro" id="IPR043133">
    <property type="entry name" value="GTP-CH-I_C/QueF"/>
</dbReference>
<dbReference type="InterPro" id="IPR050084">
    <property type="entry name" value="NADPH_dep_7-cyano-7-deazaG_red"/>
</dbReference>
<dbReference type="InterPro" id="IPR029500">
    <property type="entry name" value="QueF"/>
</dbReference>
<dbReference type="InterPro" id="IPR016856">
    <property type="entry name" value="QueF_type1"/>
</dbReference>
<dbReference type="NCBIfam" id="TIGR03139">
    <property type="entry name" value="QueF-II"/>
    <property type="match status" value="1"/>
</dbReference>
<dbReference type="PANTHER" id="PTHR34354">
    <property type="entry name" value="NADPH-DEPENDENT 7-CYANO-7-DEAZAGUANINE REDUCTASE"/>
    <property type="match status" value="1"/>
</dbReference>
<dbReference type="PANTHER" id="PTHR34354:SF1">
    <property type="entry name" value="NADPH-DEPENDENT 7-CYANO-7-DEAZAGUANINE REDUCTASE"/>
    <property type="match status" value="1"/>
</dbReference>
<dbReference type="Pfam" id="PF14489">
    <property type="entry name" value="QueF"/>
    <property type="match status" value="1"/>
</dbReference>
<dbReference type="PIRSF" id="PIRSF027377">
    <property type="entry name" value="Nitrile_oxidored_QueF"/>
    <property type="match status" value="1"/>
</dbReference>
<dbReference type="SUPFAM" id="SSF55620">
    <property type="entry name" value="Tetrahydrobiopterin biosynthesis enzymes-like"/>
    <property type="match status" value="1"/>
</dbReference>
<feature type="chain" id="PRO_0000162993" description="NADPH-dependent 7-cyano-7-deazaguanine reductase">
    <location>
        <begin position="1"/>
        <end position="155"/>
    </location>
</feature>
<feature type="active site" description="Thioimide intermediate" evidence="1">
    <location>
        <position position="53"/>
    </location>
</feature>
<feature type="active site" description="Proton donor" evidence="1">
    <location>
        <position position="60"/>
    </location>
</feature>
<feature type="binding site" evidence="1">
    <location>
        <begin position="75"/>
        <end position="77"/>
    </location>
    <ligand>
        <name>substrate</name>
    </ligand>
</feature>
<feature type="binding site" evidence="1">
    <location>
        <begin position="94"/>
        <end position="95"/>
    </location>
    <ligand>
        <name>substrate</name>
    </ligand>
</feature>